<sequence length="583" mass="65750">MKLLHVFLLFLCFHLRFCKVTYTSQEDLVEKKCLAKKYTHLSCDKVFCQPWQRCIEGTCVCKLPYQCPKNGTAVCATNRRSFPTYCQQKSLECLHPGTKFLNNGTCTAEGKFSVSLKHGNTDSEGIVEVKLVDQDKTMFICKSSWSMREANVACLDLGFQQGADTQRRFKLSDLSINSTECLHVHCRGLETSLAECTFTKRRTMGYQDFADVVCYTQKADSPMDDFFQCVNGKYISQMKACDGINDCGDQSDELCCKACQGKGFHCKSGVCIPSQYQCNGEVDCITGEDEVGCAGFASVTQEETEILTADMDAERRRIKSLLPKLSCGVKNRMHIRRKRIVGGKRAQLGDLPWQVAIKDASGITCGGIYIGGCWILTAAHCLRASKTHRYQIWTTVVDWIHPDLKRIVIEYVDRIIFHENYNAGTYQNDIALIEMKKDGNKKDCELPRSIPACVPWSPYLFQPNDTCIVSGWGREKDNERVFSLQWGEVKLISNCSKFYGNRFYEKEMECAGTYDGSIDACKGDSGGPLVCMDANNVTYVWGVVSWGENCGKPEFPGVYTKVANYFDWISYHVGRPFISQYNV</sequence>
<protein>
    <recommendedName>
        <fullName>Complement factor I</fullName>
        <ecNumber>3.4.21.45</ecNumber>
    </recommendedName>
    <alternativeName>
        <fullName>C3B/C4B inactivator</fullName>
    </alternativeName>
    <component>
        <recommendedName>
            <fullName>Complement factor I heavy chain</fullName>
        </recommendedName>
    </component>
    <component>
        <recommendedName>
            <fullName>Complement factor I light chain</fullName>
        </recommendedName>
    </component>
</protein>
<feature type="signal peptide">
    <location>
        <begin position="1"/>
        <end position="18"/>
    </location>
</feature>
<feature type="chain" id="PRO_0000027568" description="Complement factor I">
    <location>
        <begin position="19"/>
        <end position="583"/>
    </location>
</feature>
<feature type="chain" id="PRO_0000027569" description="Complement factor I heavy chain">
    <location>
        <begin position="19"/>
        <end position="335"/>
    </location>
</feature>
<feature type="chain" id="PRO_0000027570" description="Complement factor I light chain">
    <location>
        <begin position="340"/>
        <end position="583"/>
    </location>
</feature>
<feature type="domain" description="Kazal-like" evidence="5">
    <location>
        <begin position="55"/>
        <end position="108"/>
    </location>
</feature>
<feature type="domain" description="SRCR" evidence="3">
    <location>
        <begin position="114"/>
        <end position="212"/>
    </location>
</feature>
<feature type="domain" description="LDL-receptor class A 1" evidence="2">
    <location>
        <begin position="213"/>
        <end position="257"/>
    </location>
</feature>
<feature type="domain" description="LDL-receptor class A 2" evidence="2">
    <location>
        <begin position="258"/>
        <end position="294"/>
    </location>
</feature>
<feature type="domain" description="Peptidase S1" evidence="4">
    <location>
        <begin position="340"/>
        <end position="574"/>
    </location>
</feature>
<feature type="active site" description="Charge relay system" evidence="1">
    <location>
        <position position="380"/>
    </location>
</feature>
<feature type="active site" description="Charge relay system" evidence="1">
    <location>
        <position position="429"/>
    </location>
</feature>
<feature type="active site" description="Charge relay system" evidence="1">
    <location>
        <position position="525"/>
    </location>
</feature>
<feature type="binding site" evidence="21 33">
    <location>
        <position position="239"/>
    </location>
    <ligand>
        <name>Ca(2+)</name>
        <dbReference type="ChEBI" id="CHEBI:29108"/>
        <label>1</label>
    </ligand>
</feature>
<feature type="binding site" evidence="21 33">
    <location>
        <position position="242"/>
    </location>
    <ligand>
        <name>Ca(2+)</name>
        <dbReference type="ChEBI" id="CHEBI:29108"/>
        <label>1</label>
    </ligand>
</feature>
<feature type="binding site" evidence="21 33">
    <location>
        <position position="244"/>
    </location>
    <ligand>
        <name>Ca(2+)</name>
        <dbReference type="ChEBI" id="CHEBI:29108"/>
        <label>1</label>
    </ligand>
</feature>
<feature type="binding site" evidence="21 33">
    <location>
        <position position="246"/>
    </location>
    <ligand>
        <name>Ca(2+)</name>
        <dbReference type="ChEBI" id="CHEBI:29108"/>
        <label>1</label>
    </ligand>
</feature>
<feature type="binding site" evidence="21 33">
    <location>
        <position position="252"/>
    </location>
    <ligand>
        <name>Ca(2+)</name>
        <dbReference type="ChEBI" id="CHEBI:29108"/>
        <label>1</label>
    </ligand>
</feature>
<feature type="binding site" evidence="21 33">
    <location>
        <position position="253"/>
    </location>
    <ligand>
        <name>Ca(2+)</name>
        <dbReference type="ChEBI" id="CHEBI:29108"/>
        <label>1</label>
    </ligand>
</feature>
<feature type="binding site" evidence="21 33">
    <location>
        <position position="276"/>
    </location>
    <ligand>
        <name>Ca(2+)</name>
        <dbReference type="ChEBI" id="CHEBI:29108"/>
        <label>2</label>
    </ligand>
</feature>
<feature type="binding site" evidence="21 33">
    <location>
        <position position="279"/>
    </location>
    <ligand>
        <name>Ca(2+)</name>
        <dbReference type="ChEBI" id="CHEBI:29108"/>
        <label>2</label>
    </ligand>
</feature>
<feature type="binding site" evidence="21 33">
    <location>
        <position position="281"/>
    </location>
    <ligand>
        <name>Ca(2+)</name>
        <dbReference type="ChEBI" id="CHEBI:29108"/>
        <label>2</label>
    </ligand>
</feature>
<feature type="binding site" evidence="21 33">
    <location>
        <position position="283"/>
    </location>
    <ligand>
        <name>Ca(2+)</name>
        <dbReference type="ChEBI" id="CHEBI:29108"/>
        <label>2</label>
    </ligand>
</feature>
<feature type="binding site" evidence="21 33">
    <location>
        <position position="289"/>
    </location>
    <ligand>
        <name>Ca(2+)</name>
        <dbReference type="ChEBI" id="CHEBI:29108"/>
        <label>2</label>
    </ligand>
</feature>
<feature type="binding site" evidence="21 33">
    <location>
        <position position="290"/>
    </location>
    <ligand>
        <name>Ca(2+)</name>
        <dbReference type="ChEBI" id="CHEBI:29108"/>
        <label>2</label>
    </ligand>
</feature>
<feature type="glycosylation site" description="N-linked (GlcNAc...) asparagine" evidence="10 21 33">
    <location>
        <position position="70"/>
    </location>
</feature>
<feature type="glycosylation site" description="N-linked (GlcNAc...) (complex) asparagine" evidence="10 16 17 18 21 33">
    <location>
        <position position="103"/>
    </location>
</feature>
<feature type="glycosylation site" description="N-linked (GlcNAc...) asparagine" evidence="10 21 33">
    <location>
        <position position="177"/>
    </location>
</feature>
<feature type="glycosylation site" description="N-linked (GlcNAc...) asparagine" evidence="8 10 21 33">
    <location>
        <position position="464"/>
    </location>
</feature>
<feature type="glycosylation site" description="N-linked (GlcNAc...) asparagine" evidence="21 33">
    <location>
        <position position="494"/>
    </location>
</feature>
<feature type="glycosylation site" description="N-linked (GlcNAc...) asparagine" evidence="10 21 33">
    <location>
        <position position="536"/>
    </location>
</feature>
<feature type="disulfide bond" evidence="21 23 33 34">
    <location>
        <begin position="33"/>
        <end position="255"/>
    </location>
</feature>
<feature type="disulfide bond" evidence="21 23 33 34">
    <location>
        <begin position="43"/>
        <end position="54"/>
    </location>
</feature>
<feature type="disulfide bond" evidence="21 23 33 34">
    <location>
        <begin position="48"/>
        <end position="59"/>
    </location>
</feature>
<feature type="disulfide bond" evidence="21 23 33 34">
    <location>
        <begin position="61"/>
        <end position="93"/>
    </location>
</feature>
<feature type="disulfide bond" evidence="21 23 33 34">
    <location>
        <begin position="67"/>
        <end position="86"/>
    </location>
</feature>
<feature type="disulfide bond" evidence="21 23 33 34">
    <location>
        <begin position="75"/>
        <end position="106"/>
    </location>
</feature>
<feature type="disulfide bond" evidence="21 23 33 34">
    <location>
        <begin position="141"/>
        <end position="181"/>
    </location>
</feature>
<feature type="disulfide bond" evidence="21 23 33 34">
    <location>
        <begin position="154"/>
        <end position="214"/>
    </location>
</feature>
<feature type="disulfide bond" evidence="21 23 33 34">
    <location>
        <begin position="186"/>
        <end position="196"/>
    </location>
</feature>
<feature type="disulfide bond" evidence="21 23 33 34">
    <location>
        <begin position="229"/>
        <end position="247"/>
    </location>
</feature>
<feature type="disulfide bond" evidence="21 23 33 34">
    <location>
        <begin position="241"/>
        <end position="256"/>
    </location>
</feature>
<feature type="disulfide bond" evidence="21 23 33 34">
    <location>
        <begin position="259"/>
        <end position="271"/>
    </location>
</feature>
<feature type="disulfide bond" evidence="21 23 33 34">
    <location>
        <begin position="266"/>
        <end position="284"/>
    </location>
</feature>
<feature type="disulfide bond" evidence="21 23 33 34">
    <location>
        <begin position="278"/>
        <end position="293"/>
    </location>
</feature>
<feature type="disulfide bond" description="Interchain (between heavy and light chains)" evidence="21 33">
    <location>
        <begin position="327"/>
        <end position="453"/>
    </location>
</feature>
<feature type="disulfide bond" evidence="21 23 33 34">
    <location>
        <begin position="365"/>
        <end position="381"/>
    </location>
</feature>
<feature type="disulfide bond" evidence="21 23 33 34">
    <location>
        <begin position="373"/>
        <end position="444"/>
    </location>
</feature>
<feature type="disulfide bond" description="Interchain (with C-327)" evidence="23 34">
    <location>
        <position position="453"/>
    </location>
</feature>
<feature type="disulfide bond" evidence="21 23 33 34">
    <location>
        <begin position="467"/>
        <end position="531"/>
    </location>
</feature>
<feature type="disulfide bond" evidence="21 23 33 34">
    <location>
        <begin position="495"/>
        <end position="510"/>
    </location>
</feature>
<feature type="disulfide bond" evidence="21 23 33 34">
    <location>
        <begin position="521"/>
        <end position="550"/>
    </location>
</feature>
<feature type="sequence variant" id="VAR_063665" description="In AHUS3; dbSNP:rs773187287." evidence="19">
    <original>P</original>
    <variation>L</variation>
    <location>
        <position position="64"/>
    </location>
</feature>
<feature type="sequence variant" id="VAR_063666" description="In AHUS3 and ARMD13; the mutant is both expressed and secreted at lower levels than wild-type protein; mediates C3 degradation to a lesser extent than that of controls; dbSNP:rs141853578." evidence="19 22">
    <original>G</original>
    <variation>R</variation>
    <location>
        <position position="119"/>
    </location>
</feature>
<feature type="sequence variant" id="VAR_063667" description="In AHUS3; dbSNP:rs75612300." evidence="19">
    <original>H</original>
    <variation>R</variation>
    <location>
        <position position="183"/>
    </location>
</feature>
<feature type="sequence variant" id="VAR_070843" description="In dbSNP:rs769721080." evidence="22">
    <original>G</original>
    <variation>A</variation>
    <location>
        <position position="188"/>
    </location>
</feature>
<feature type="sequence variant" id="VAR_034907" description="In CFI deficiency; dbSNP:rs121964916." evidence="12">
    <original>G</original>
    <variation>D</variation>
    <location>
        <position position="243"/>
    </location>
</feature>
<feature type="sequence variant" id="VAR_063668" description="In AHUS3; dbSNP:rs182078921." evidence="19">
    <original>G</original>
    <variation>R</variation>
    <location>
        <position position="287"/>
    </location>
</feature>
<feature type="sequence variant" id="VAR_034908" description="In dbSNP:rs11098044." evidence="24 25 35">
    <original>T</original>
    <variation>A</variation>
    <location>
        <position position="300"/>
    </location>
</feature>
<feature type="sequence variant" id="VAR_063669" description="In AHUS3; dbSNP:rs121964917." evidence="11">
    <original>R</original>
    <variation>W</variation>
    <location>
        <position position="317"/>
    </location>
</feature>
<feature type="sequence variant" id="VAR_030343" description="In AHUS3; dbSNP:rs769419740." evidence="13">
    <original>I</original>
    <variation>T</variation>
    <location>
        <position position="340"/>
    </location>
</feature>
<feature type="sequence variant" id="VAR_063670" description="In AHUS3; dbSNP:rs61733901." evidence="19">
    <original>I</original>
    <variation>L</variation>
    <location>
        <position position="416"/>
    </location>
</feature>
<feature type="sequence variant" id="VAR_026757" description="In CFI deficiency; dbSNP:rs121964912." evidence="29">
    <original>H</original>
    <variation>L</variation>
    <location>
        <position position="418"/>
    </location>
</feature>
<feature type="sequence variant" id="VAR_063671" description="In AHUS3; dbSNP:rs121964918." evidence="11">
    <original>D</original>
    <variation>N</variation>
    <location>
        <position position="519"/>
    </location>
</feature>
<feature type="sequence variant" id="VAR_063672" description="In AHUS3." evidence="19">
    <original>K</original>
    <variation>T</variation>
    <location>
        <position position="522"/>
    </location>
</feature>
<feature type="sequence variant" id="VAR_030344" description="In AHUS3; dbSNP:rs121964914." evidence="9">
    <original>D</original>
    <variation>V</variation>
    <location>
        <position position="524"/>
    </location>
</feature>
<feature type="sequence conflict" description="In Ref. 2; AAA52455." evidence="32" ref="2">
    <original>V</original>
    <variation>F</variation>
    <location>
        <position position="558"/>
    </location>
</feature>
<feature type="strand" evidence="36">
    <location>
        <begin position="31"/>
        <end position="33"/>
    </location>
</feature>
<feature type="turn" evidence="36">
    <location>
        <begin position="34"/>
        <end position="36"/>
    </location>
</feature>
<feature type="helix" evidence="36">
    <location>
        <begin position="43"/>
        <end position="45"/>
    </location>
</feature>
<feature type="strand" evidence="36">
    <location>
        <begin position="52"/>
        <end position="55"/>
    </location>
</feature>
<feature type="strand" evidence="36">
    <location>
        <begin position="58"/>
        <end position="61"/>
    </location>
</feature>
<feature type="helix" evidence="36">
    <location>
        <begin position="64"/>
        <end position="66"/>
    </location>
</feature>
<feature type="strand" evidence="36">
    <location>
        <begin position="74"/>
        <end position="76"/>
    </location>
</feature>
<feature type="turn" evidence="36">
    <location>
        <begin position="77"/>
        <end position="79"/>
    </location>
</feature>
<feature type="strand" evidence="36">
    <location>
        <begin position="80"/>
        <end position="84"/>
    </location>
</feature>
<feature type="helix" evidence="36">
    <location>
        <begin position="85"/>
        <end position="94"/>
    </location>
</feature>
<feature type="strand" evidence="36">
    <location>
        <begin position="100"/>
        <end position="105"/>
    </location>
</feature>
<feature type="strand" evidence="36">
    <location>
        <begin position="113"/>
        <end position="118"/>
    </location>
</feature>
<feature type="strand" evidence="36">
    <location>
        <begin position="124"/>
        <end position="130"/>
    </location>
</feature>
<feature type="strand" evidence="36">
    <location>
        <begin position="138"/>
        <end position="140"/>
    </location>
</feature>
<feature type="helix" evidence="36">
    <location>
        <begin position="147"/>
        <end position="156"/>
    </location>
</feature>
<feature type="strand" evidence="36">
    <location>
        <begin position="173"/>
        <end position="175"/>
    </location>
</feature>
<feature type="strand" evidence="36">
    <location>
        <begin position="182"/>
        <end position="185"/>
    </location>
</feature>
<feature type="helix" evidence="36">
    <location>
        <begin position="193"/>
        <end position="195"/>
    </location>
</feature>
<feature type="strand" evidence="36">
    <location>
        <begin position="196"/>
        <end position="199"/>
    </location>
</feature>
<feature type="strand" evidence="36">
    <location>
        <begin position="211"/>
        <end position="214"/>
    </location>
</feature>
<feature type="strand" evidence="36">
    <location>
        <begin position="242"/>
        <end position="244"/>
    </location>
</feature>
<feature type="strand" evidence="36">
    <location>
        <begin position="247"/>
        <end position="258"/>
    </location>
</feature>
<feature type="strand" evidence="36">
    <location>
        <begin position="260"/>
        <end position="262"/>
    </location>
</feature>
<feature type="strand" evidence="36">
    <location>
        <begin position="264"/>
        <end position="266"/>
    </location>
</feature>
<feature type="turn" evidence="36">
    <location>
        <begin position="267"/>
        <end position="269"/>
    </location>
</feature>
<feature type="strand" evidence="36">
    <location>
        <begin position="270"/>
        <end position="272"/>
    </location>
</feature>
<feature type="helix" evidence="36">
    <location>
        <begin position="274"/>
        <end position="276"/>
    </location>
</feature>
<feature type="strand" evidence="36">
    <location>
        <begin position="279"/>
        <end position="281"/>
    </location>
</feature>
<feature type="strand" evidence="36">
    <location>
        <begin position="284"/>
        <end position="286"/>
    </location>
</feature>
<feature type="strand" evidence="36">
    <location>
        <begin position="290"/>
        <end position="292"/>
    </location>
</feature>
<feature type="helix" evidence="36">
    <location>
        <begin position="312"/>
        <end position="319"/>
    </location>
</feature>
<feature type="strand" evidence="36">
    <location>
        <begin position="346"/>
        <end position="348"/>
    </location>
</feature>
<feature type="strand" evidence="36">
    <location>
        <begin position="356"/>
        <end position="362"/>
    </location>
</feature>
<feature type="strand" evidence="36">
    <location>
        <begin position="368"/>
        <end position="371"/>
    </location>
</feature>
<feature type="strand" evidence="36">
    <location>
        <begin position="374"/>
        <end position="377"/>
    </location>
</feature>
<feature type="helix" evidence="36">
    <location>
        <begin position="379"/>
        <end position="382"/>
    </location>
</feature>
<feature type="strand" evidence="36">
    <location>
        <begin position="390"/>
        <end position="393"/>
    </location>
</feature>
<feature type="strand" evidence="36">
    <location>
        <begin position="409"/>
        <end position="417"/>
    </location>
</feature>
<feature type="turn" evidence="36">
    <location>
        <begin position="423"/>
        <end position="425"/>
    </location>
</feature>
<feature type="strand" evidence="36">
    <location>
        <begin position="431"/>
        <end position="435"/>
    </location>
</feature>
<feature type="strand" evidence="36">
    <location>
        <begin position="439"/>
        <end position="442"/>
    </location>
</feature>
<feature type="strand" evidence="36">
    <location>
        <begin position="466"/>
        <end position="470"/>
    </location>
</feature>
<feature type="strand" evidence="36">
    <location>
        <begin position="486"/>
        <end position="491"/>
    </location>
</feature>
<feature type="helix" evidence="36">
    <location>
        <begin position="496"/>
        <end position="499"/>
    </location>
</feature>
<feature type="turn" evidence="36">
    <location>
        <begin position="505"/>
        <end position="507"/>
    </location>
</feature>
<feature type="strand" evidence="36">
    <location>
        <begin position="508"/>
        <end position="513"/>
    </location>
</feature>
<feature type="strand" evidence="36">
    <location>
        <begin position="528"/>
        <end position="532"/>
    </location>
</feature>
<feature type="strand" evidence="36">
    <location>
        <begin position="538"/>
        <end position="546"/>
    </location>
</feature>
<feature type="strand" evidence="36">
    <location>
        <begin position="549"/>
        <end position="551"/>
    </location>
</feature>
<feature type="strand" evidence="36">
    <location>
        <begin position="557"/>
        <end position="561"/>
    </location>
</feature>
<feature type="helix" evidence="36">
    <location>
        <begin position="562"/>
        <end position="565"/>
    </location>
</feature>
<feature type="helix" evidence="36">
    <location>
        <begin position="566"/>
        <end position="572"/>
    </location>
</feature>
<reference key="1">
    <citation type="journal article" date="1987" name="Biochem. J.">
        <title>Characterization of primary amino acid sequence of human complement control protein factor I from an analysis of cDNA clones.</title>
        <authorList>
            <person name="Catterall C.F."/>
            <person name="Lyons A."/>
            <person name="Sim R.M."/>
            <person name="Day A.J."/>
            <person name="Harris T.J.R."/>
        </authorList>
    </citation>
    <scope>NUCLEOTIDE SEQUENCE [MRNA]</scope>
    <scope>VARIANT ALA-300</scope>
    <source>
        <tissue>Liver</tissue>
    </source>
</reference>
<reference key="2">
    <citation type="journal article" date="1987" name="J. Biol. Chem.">
        <title>Human complement factor I: analysis of cDNA-derived primary structure and assignment of its gene to chromosome 4.</title>
        <authorList>
            <person name="Goldberger G."/>
            <person name="Bruns G.A.P."/>
            <person name="Rits M."/>
            <person name="Edge M.D."/>
            <person name="Kwiatkowski D.J."/>
        </authorList>
    </citation>
    <scope>NUCLEOTIDE SEQUENCE [MRNA]</scope>
    <scope>VARIANT ALA-300</scope>
</reference>
<reference key="3">
    <citation type="journal article" date="2005" name="Nature">
        <title>Generation and annotation of the DNA sequences of human chromosomes 2 and 4.</title>
        <authorList>
            <person name="Hillier L.W."/>
            <person name="Graves T.A."/>
            <person name="Fulton R.S."/>
            <person name="Fulton L.A."/>
            <person name="Pepin K.H."/>
            <person name="Minx P."/>
            <person name="Wagner-McPherson C."/>
            <person name="Layman D."/>
            <person name="Wylie K."/>
            <person name="Sekhon M."/>
            <person name="Becker M.C."/>
            <person name="Fewell G.A."/>
            <person name="Delehaunty K.D."/>
            <person name="Miner T.L."/>
            <person name="Nash W.E."/>
            <person name="Kremitzki C."/>
            <person name="Oddy L."/>
            <person name="Du H."/>
            <person name="Sun H."/>
            <person name="Bradshaw-Cordum H."/>
            <person name="Ali J."/>
            <person name="Carter J."/>
            <person name="Cordes M."/>
            <person name="Harris A."/>
            <person name="Isak A."/>
            <person name="van Brunt A."/>
            <person name="Nguyen C."/>
            <person name="Du F."/>
            <person name="Courtney L."/>
            <person name="Kalicki J."/>
            <person name="Ozersky P."/>
            <person name="Abbott S."/>
            <person name="Armstrong J."/>
            <person name="Belter E.A."/>
            <person name="Caruso L."/>
            <person name="Cedroni M."/>
            <person name="Cotton M."/>
            <person name="Davidson T."/>
            <person name="Desai A."/>
            <person name="Elliott G."/>
            <person name="Erb T."/>
            <person name="Fronick C."/>
            <person name="Gaige T."/>
            <person name="Haakenson W."/>
            <person name="Haglund K."/>
            <person name="Holmes A."/>
            <person name="Harkins R."/>
            <person name="Kim K."/>
            <person name="Kruchowski S.S."/>
            <person name="Strong C.M."/>
            <person name="Grewal N."/>
            <person name="Goyea E."/>
            <person name="Hou S."/>
            <person name="Levy A."/>
            <person name="Martinka S."/>
            <person name="Mead K."/>
            <person name="McLellan M.D."/>
            <person name="Meyer R."/>
            <person name="Randall-Maher J."/>
            <person name="Tomlinson C."/>
            <person name="Dauphin-Kohlberg S."/>
            <person name="Kozlowicz-Reilly A."/>
            <person name="Shah N."/>
            <person name="Swearengen-Shahid S."/>
            <person name="Snider J."/>
            <person name="Strong J.T."/>
            <person name="Thompson J."/>
            <person name="Yoakum M."/>
            <person name="Leonard S."/>
            <person name="Pearman C."/>
            <person name="Trani L."/>
            <person name="Radionenko M."/>
            <person name="Waligorski J.E."/>
            <person name="Wang C."/>
            <person name="Rock S.M."/>
            <person name="Tin-Wollam A.-M."/>
            <person name="Maupin R."/>
            <person name="Latreille P."/>
            <person name="Wendl M.C."/>
            <person name="Yang S.-P."/>
            <person name="Pohl C."/>
            <person name="Wallis J.W."/>
            <person name="Spieth J."/>
            <person name="Bieri T.A."/>
            <person name="Berkowicz N."/>
            <person name="Nelson J.O."/>
            <person name="Osborne J."/>
            <person name="Ding L."/>
            <person name="Meyer R."/>
            <person name="Sabo A."/>
            <person name="Shotland Y."/>
            <person name="Sinha P."/>
            <person name="Wohldmann P.E."/>
            <person name="Cook L.L."/>
            <person name="Hickenbotham M.T."/>
            <person name="Eldred J."/>
            <person name="Williams D."/>
            <person name="Jones T.A."/>
            <person name="She X."/>
            <person name="Ciccarelli F.D."/>
            <person name="Izaurralde E."/>
            <person name="Taylor J."/>
            <person name="Schmutz J."/>
            <person name="Myers R.M."/>
            <person name="Cox D.R."/>
            <person name="Huang X."/>
            <person name="McPherson J.D."/>
            <person name="Mardis E.R."/>
            <person name="Clifton S.W."/>
            <person name="Warren W.C."/>
            <person name="Chinwalla A.T."/>
            <person name="Eddy S.R."/>
            <person name="Marra M.A."/>
            <person name="Ovcharenko I."/>
            <person name="Furey T.S."/>
            <person name="Miller W."/>
            <person name="Eichler E.E."/>
            <person name="Bork P."/>
            <person name="Suyama M."/>
            <person name="Torrents D."/>
            <person name="Waterston R.H."/>
            <person name="Wilson R.K."/>
        </authorList>
    </citation>
    <scope>NUCLEOTIDE SEQUENCE [LARGE SCALE GENOMIC DNA]</scope>
</reference>
<reference key="4">
    <citation type="journal article" date="1998" name="Gene">
        <title>Cloning and characterization of the promoter for the human complement factor I (C3b/C4b inactivator) gene.</title>
        <authorList>
            <person name="Minta J.O."/>
            <person name="Fung M."/>
            <person name="Turner S."/>
            <person name="Eren R."/>
            <person name="Zemach L."/>
            <person name="Rits M."/>
            <person name="Goldberger G."/>
        </authorList>
    </citation>
    <scope>NUCLEOTIDE SEQUENCE [GENOMIC DNA] OF 1-18</scope>
    <source>
        <tissue>Liver</tissue>
    </source>
</reference>
<reference key="5">
    <citation type="journal article" date="1980" name="J. Exp. Med.">
        <title>Biosynthesis of the complement components and the regulatory proteins of the alternative complement pathway by human peripheral blood monocytes.</title>
        <authorList>
            <person name="Whaley K."/>
        </authorList>
    </citation>
    <scope>TISSUE SPECIFICITY</scope>
</reference>
<reference key="6">
    <citation type="journal article" date="1980" name="Mol. Immunol.">
        <title>The physiological breakdown of the third component of human complement.</title>
        <authorList>
            <person name="Harrison R.A."/>
            <person name="Lachmann P.J."/>
        </authorList>
    </citation>
    <scope>FUNCTION</scope>
</reference>
<reference key="7">
    <citation type="journal article" date="1984" name="J. Biol. Chem.">
        <title>Biosynthesis and postsynthetic processing of human C3b/C4b inactivator (factor I) in three hepatoma cell lines.</title>
        <authorList>
            <person name="Goldberger G."/>
            <person name="Arnaout M.A."/>
            <person name="Aden D."/>
            <person name="Kay R."/>
            <person name="Rits M."/>
            <person name="Colten H.R."/>
        </authorList>
    </citation>
    <scope>TISSUE SPECIFICITY</scope>
    <scope>SUBCELLULAR LOCATION</scope>
</reference>
<reference key="8">
    <citation type="journal article" date="1990" name="J. Biochem.">
        <title>Regulation of proteolytic activity of complement factor I by pH: C3b/C4b receptor (CR1) and membrane cofactor protein (MCP) have different pH optima for factor I-mediated cleavage of C3b.</title>
        <authorList>
            <person name="Seya T."/>
            <person name="Okada M."/>
            <person name="Nishino H."/>
            <person name="Atkinson J.P."/>
        </authorList>
    </citation>
    <scope>FUNCTION</scope>
</reference>
<reference key="9">
    <citation type="journal article" date="1995" name="FEBS Lett.">
        <title>Beta-sheet secondary structure of an LDL receptor domain from complement factor I by consensus structure predictions and spectroscopy.</title>
        <authorList>
            <person name="Ullman C.G."/>
            <person name="Haris P.I."/>
            <person name="Smith K.F."/>
            <person name="Sim R.B."/>
            <person name="Emery V.C."/>
            <person name="Perkins S.J."/>
        </authorList>
    </citation>
    <scope>PROTEIN SEQUENCE OF 258-269</scope>
</reference>
<reference key="10">
    <citation type="journal article" date="1997" name="Biochem. J.">
        <title>Interactions between human complement components factor H, factor I and C3b.</title>
        <authorList>
            <person name="Soames C.J."/>
            <person name="Sim R.B."/>
        </authorList>
    </citation>
    <scope>INTERACTION WITH CFH AND C3B</scope>
</reference>
<reference key="11">
    <citation type="journal article" date="1998" name="J. Immunol.">
        <title>Interaction of vaccinia virus complement control protein with human complement proteins: factor I-mediated degradation of C3b to iC3b1 inactivates the alternative complement pathway.</title>
        <authorList>
            <person name="Sahu A."/>
            <person name="Isaacs S.N."/>
            <person name="Soulika A.M."/>
            <person name="Lambris J.D."/>
        </authorList>
    </citation>
    <scope>FUNCTION</scope>
</reference>
<reference key="12">
    <citation type="journal article" date="2002" name="J. Immunol.">
        <title>Role of membrane cofactor protein (CD46) in regulation of C4b and C3b deposited on cells.</title>
        <authorList>
            <person name="Barilla-LaBarca M.L."/>
            <person name="Liszewski M.K."/>
            <person name="Lambris J.D."/>
            <person name="Hourcade D."/>
            <person name="Atkinson J.P."/>
        </authorList>
    </citation>
    <scope>FUNCTION</scope>
</reference>
<reference key="13">
    <citation type="journal article" date="2004" name="Proteomics">
        <title>Screening for N-glycosylated proteins by liquid chromatography mass spectrometry.</title>
        <authorList>
            <person name="Bunkenborg J."/>
            <person name="Pilch B.J."/>
            <person name="Podtelejnikov A.V."/>
            <person name="Wisniewski J.R."/>
        </authorList>
    </citation>
    <scope>GLYCOSYLATION [LARGE SCALE ANALYSIS] AT ASN-464</scope>
    <source>
        <tissue>Plasma</tissue>
    </source>
</reference>
<reference key="14">
    <citation type="journal article" date="2005" name="J. Proteome Res.">
        <title>Human plasma N-glycoproteome analysis by immunoaffinity subtraction, hydrazide chemistry, and mass spectrometry.</title>
        <authorList>
            <person name="Liu T."/>
            <person name="Qian W.-J."/>
            <person name="Gritsenko M.A."/>
            <person name="Camp D.G. II"/>
            <person name="Monroe M.E."/>
            <person name="Moore R.J."/>
            <person name="Smith R.D."/>
        </authorList>
    </citation>
    <scope>GLYCOSYLATION [LARGE SCALE ANALYSIS] AT ASN-70; ASN-103; ASN-177; ASN-464 AND ASN-536</scope>
    <source>
        <tissue>Plasma</tissue>
    </source>
</reference>
<reference key="15">
    <citation type="journal article" date="2007" name="Mol. Immunol.">
        <title>Human keratinocytes produce the complement inhibitor factor I: Synthesis is regulated by interferon-gamma.</title>
        <authorList>
            <person name="Timar K.K."/>
            <person name="Junnikkala S."/>
            <person name="Dallos A."/>
            <person name="Jarva H."/>
            <person name="Bhuiyan Z.A."/>
            <person name="Meri S."/>
            <person name="Bos J.D."/>
            <person name="Asghar S.S."/>
        </authorList>
    </citation>
    <scope>TISSUE SPECIFICITY</scope>
    <scope>FUNCTION</scope>
</reference>
<reference key="16">
    <citation type="journal article" date="2008" name="J. Infect. Dis.">
        <title>Staphylococcus aureus clumping factor A binds to complement regulator factor I and increases factor I cleavage of C3b.</title>
        <authorList>
            <person name="Hair P.S."/>
            <person name="Ward M.D."/>
            <person name="Semmes O.J."/>
            <person name="Foster T.J."/>
            <person name="Cunnion K.M."/>
        </authorList>
    </citation>
    <scope>INTERACTION WITH STAPHYLOCOCCUS AUREUS CLUMPING FACTOR A/CLFA (MICROBIAL INFECTION)</scope>
</reference>
<reference key="17">
    <citation type="journal article" date="2009" name="J. Proteome Res.">
        <title>Glycoproteomics analysis of human liver tissue by combination of multiple enzyme digestion and hydrazide chemistry.</title>
        <authorList>
            <person name="Chen R."/>
            <person name="Jiang X."/>
            <person name="Sun D."/>
            <person name="Han G."/>
            <person name="Wang F."/>
            <person name="Ye M."/>
            <person name="Wang L."/>
            <person name="Zou H."/>
        </authorList>
    </citation>
    <scope>GLYCOSYLATION [LARGE SCALE ANALYSIS] AT ASN-103</scope>
    <source>
        <tissue>Liver</tissue>
    </source>
</reference>
<reference key="18">
    <citation type="journal article" date="2009" name="Mol. Cell. Proteomics">
        <title>A strategy for precise and large scale identification of core fucosylated glycoproteins.</title>
        <authorList>
            <person name="Jia W."/>
            <person name="Lu Z."/>
            <person name="Fu Y."/>
            <person name="Wang H.P."/>
            <person name="Wang L.H."/>
            <person name="Chi H."/>
            <person name="Yuan Z.F."/>
            <person name="Zheng Z.B."/>
            <person name="Song L.N."/>
            <person name="Han H.H."/>
            <person name="Liang Y.M."/>
            <person name="Wang J.L."/>
            <person name="Cai Y."/>
            <person name="Zhang Y.K."/>
            <person name="Deng Y.L."/>
            <person name="Ying W.T."/>
            <person name="He S.M."/>
            <person name="Qian X.H."/>
        </authorList>
    </citation>
    <scope>GLYCOSYLATION AT ASN-103</scope>
</reference>
<reference key="19">
    <citation type="journal article" date="2009" name="Nat. Methods">
        <title>Enrichment of glycopeptides for glycan structure and attachment site identification.</title>
        <authorList>
            <person name="Nilsson J."/>
            <person name="Rueetschi U."/>
            <person name="Halim A."/>
            <person name="Hesse C."/>
            <person name="Carlsohn E."/>
            <person name="Brinkmalm G."/>
            <person name="Larson G."/>
        </authorList>
    </citation>
    <scope>GLYCOSYLATION [LARGE SCALE ANALYSIS] AT ASN-103</scope>
    <scope>STRUCTURE OF CARBOHYDRATES</scope>
    <source>
        <tissue>Cerebrospinal fluid</tissue>
    </source>
</reference>
<reference evidence="33" key="20">
    <citation type="journal article" date="2011" name="Proc. Natl. Acad. Sci. U.S.A.">
        <title>Structural basis for complement factor I control and its disease-associated sequence polymorphisms.</title>
        <authorList>
            <person name="Roversi P."/>
            <person name="Johnson S."/>
            <person name="Caesar J.J."/>
            <person name="McLean F."/>
            <person name="Leath K.J."/>
            <person name="Tsiftsoglou S.A."/>
            <person name="Morgan B.P."/>
            <person name="Harris C.L."/>
            <person name="Sim R.B."/>
            <person name="Lea S.M."/>
        </authorList>
    </citation>
    <scope>X-RAY CRYSTALLOGRAPHY (2.69 ANGSTROMS) OF 19-583 IN COMPLEX WITH CALCIUM</scope>
    <scope>GLYCOSYLATION AT ASN-70; ASN-103; ASN-177; ASN-464; ASN-494 AND ASN-536</scope>
    <scope>DISULFIDE BONDS</scope>
</reference>
<reference key="21">
    <citation type="journal article" date="2017" name="Nat. Struct. Mol. Biol.">
        <title>Regulator-dependent mechanisms of C3b processing by factor I allow differentiation of immune responses.</title>
        <authorList>
            <person name="Xue X."/>
            <person name="Wu J."/>
            <person name="Ricklin D."/>
            <person name="Forneris F."/>
            <person name="Di Crescenzio P."/>
            <person name="Schmidt C.Q."/>
            <person name="Granneman J."/>
            <person name="Sharp T.H."/>
            <person name="Lambris J.D."/>
            <person name="Gros P."/>
        </authorList>
    </citation>
    <scope>X-RAY CRYSTALLOGRAPHY (2.69 ANGSTROMS) OF 19-339 AND 340-583</scope>
    <scope>INTERACTION WITH C3B AND CFH</scope>
    <scope>DISULFIDE BOND</scope>
    <scope>FUNCTION</scope>
</reference>
<reference key="22">
    <citation type="journal article" date="1996" name="J. Clin. Invest.">
        <title>The molecular basis of hereditary complement factor I deficiency.</title>
        <authorList>
            <person name="Vyse T.J."/>
            <person name="Morley B.J."/>
            <person name="Bartok I."/>
            <person name="Theodoridis E.L."/>
            <person name="Davies K.A."/>
            <person name="Webster A.D.B."/>
            <person name="Walport M.J."/>
        </authorList>
    </citation>
    <scope>VARIANT CFI DEFICIENCY LEU-418</scope>
</reference>
<reference key="23">
    <citation type="journal article" date="2003" name="Clin. Exp. Immunol.">
        <title>Molecular characterization of homozygous hereditary factor I deficiency.</title>
        <authorList>
            <person name="Baracho G.V."/>
            <person name="Nudelman V."/>
            <person name="Isaac L."/>
        </authorList>
    </citation>
    <scope>INVOLVEMENT IN CFI DEFICIENCY</scope>
</reference>
<reference key="24">
    <citation type="journal article" date="2004" name="J. Med. Genet.">
        <title>Complement factor I: a susceptibility gene for atypical haemolytic uraemic syndrome.</title>
        <authorList>
            <person name="Fremeaux-Bacchi V."/>
            <person name="Dragon-Durey M.-A."/>
            <person name="Blouin J."/>
            <person name="Vigneau C."/>
            <person name="Kuypers D."/>
            <person name="Boudailliez B."/>
            <person name="Loirat C."/>
            <person name="Rondeau E."/>
            <person name="Fridman W.H."/>
        </authorList>
    </citation>
    <scope>VARIANT AHUS3 VAL-524</scope>
</reference>
<reference key="25">
    <citation type="journal article" date="2006" name="Blood">
        <title>Genetics of HUS: the impact of MCP, CFH, and IF mutations on clinical presentation, response to treatment, and outcome.</title>
        <authorList>
            <consortium name="The international registry of recurrent and familial HUS/TTP"/>
            <person name="Caprioli J."/>
            <person name="Noris M."/>
            <person name="Brioschi S."/>
            <person name="Pianetti G."/>
            <person name="Castelletti F."/>
            <person name="Bettinaglio P."/>
            <person name="Mele C."/>
            <person name="Bresin E."/>
            <person name="Cassis L."/>
            <person name="Gamba S."/>
            <person name="Porrati F."/>
            <person name="Bucchioni S."/>
            <person name="Monteferrante G."/>
            <person name="Fang C.J."/>
            <person name="Liszewski M.K."/>
            <person name="Kavanagh D."/>
            <person name="Atkinson J.P."/>
            <person name="Remuzzi G."/>
        </authorList>
    </citation>
    <scope>VARIANTS AHUS3 TRP-317 AND ASN-519</scope>
</reference>
<reference key="26">
    <citation type="journal article" date="2007" name="J. Med. Genet.">
        <title>Primary glomerulonephritis with isolated C3 deposits: a new entity which shares common genetic risk factors with haemolytic uraemic syndrome.</title>
        <authorList>
            <person name="Servais A."/>
            <person name="Fremeaux-Bacchi V."/>
            <person name="Lequintrec M."/>
            <person name="Salomon R."/>
            <person name="Blouin J."/>
            <person name="Knebelmann B."/>
            <person name="Gruenfeld J.-P."/>
            <person name="Lesavre P."/>
            <person name="Noeel L.-H."/>
            <person name="Fakhouri F."/>
        </authorList>
    </citation>
    <scope>VARIANT CFI DEFICIENCY ASP-243</scope>
</reference>
<reference key="27">
    <citation type="journal article" date="2007" name="Pediatr. Nephrol.">
        <title>A missense mutation in factor I (IF) predisposes to atypical haemolytic uraemic syndrome.</title>
        <authorList>
            <person name="Geelen J."/>
            <person name="van den Dries K."/>
            <person name="Roos A."/>
            <person name="van de Kar N."/>
            <person name="de Kat Angelino C."/>
            <person name="Klasen I."/>
            <person name="Monnens L."/>
            <person name="van den Heuvel L."/>
        </authorList>
    </citation>
    <scope>VARIANT AHUS3 THR-340</scope>
</reference>
<reference key="28">
    <citation type="journal article" date="2010" name="Hum. Mutat.">
        <title>Mutations in alternative pathway complement proteins in American patients with atypical hemolytic uremic syndrome.</title>
        <authorList>
            <person name="Maga T.K."/>
            <person name="Nishimura C.J."/>
            <person name="Weaver A.E."/>
            <person name="Frees K.L."/>
            <person name="Smith R.J.H."/>
        </authorList>
    </citation>
    <scope>VARIANTS AHUS3 LEU-64; ARG-119; ARG-183; ARG-287; LEU-416 AND THR-522</scope>
</reference>
<reference key="29">
    <citation type="journal article" date="2013" name="Nat. Genet.">
        <title>A functional variant in the CFI gene confers a high risk of age-related macular degeneration.</title>
        <authorList>
            <person name="van de Ven J.P."/>
            <person name="Nilsson S.C."/>
            <person name="Tan P.L."/>
            <person name="Buitendijk G.H."/>
            <person name="Ristau T."/>
            <person name="Mohlin F.C."/>
            <person name="Nabuurs S.B."/>
            <person name="Schoenmaker-Koller F.E."/>
            <person name="Smailhodzic D."/>
            <person name="Campochiaro P.A."/>
            <person name="Zack D.J."/>
            <person name="Duvvari M.R."/>
            <person name="Bakker B."/>
            <person name="Paun C.C."/>
            <person name="Boon C.J."/>
            <person name="Uitterlinden A.G."/>
            <person name="Liakopoulos S."/>
            <person name="Klevering B.J."/>
            <person name="Fauser S."/>
            <person name="Daha M.R."/>
            <person name="Katsanis N."/>
            <person name="Klaver C.C."/>
            <person name="Blom A.M."/>
            <person name="Hoyng C.B."/>
            <person name="den Hollander A.I."/>
        </authorList>
    </citation>
    <scope>VARIANT ARMD13 ARG-119</scope>
    <scope>VARIANT ALA-188</scope>
    <scope>CHARACTERIZATION OF VARIANT ARMD13 ARG-119</scope>
</reference>
<reference key="30">
    <citation type="journal article" date="2014" name="J. Proteomics">
        <title>An enzyme assisted RP-RPLC approach for in-depth analysis of human liver phosphoproteome.</title>
        <authorList>
            <person name="Bian Y."/>
            <person name="Song C."/>
            <person name="Cheng K."/>
            <person name="Dong M."/>
            <person name="Wang F."/>
            <person name="Huang J."/>
            <person name="Sun D."/>
            <person name="Wang L."/>
            <person name="Ye M."/>
            <person name="Zou H."/>
        </authorList>
    </citation>
    <scope>VARIANT [LARGE SCALE ANALYSIS] ALA-300</scope>
    <scope>IDENTIFICATION BY MASS SPECTROMETRY [LARGE SCALE ANALYSIS]</scope>
    <source>
        <tissue>Liver</tissue>
    </source>
</reference>
<gene>
    <name type="primary">CFI</name>
    <name type="synonym">IF</name>
</gene>
<accession>P05156</accession>
<accession>O60442</accession>
<comment type="function">
    <text evidence="6 14 20 23 28 31">Trypsin-like serine protease that plays an essential role in regulating the immune response by controlling all complement pathways. Inhibits these pathways by cleaving three peptide bonds in the alpha-chain of C3b and two bonds in the alpha-chain of C4b thereby inactivating these proteins (PubMed:17320177, PubMed:7360115). Essential cofactors for these reactions include factor H and C4BP in the fluid phase and membrane cofactor protein/CD46 and CR1 on cell surfaces (PubMed:12055245, PubMed:2141838, PubMed:9605165). The presence of these cofactors on healthy cells allows degradation of deposited C3b by CFI in order to prevent undesired complement activation, while in apoptotic cells or microbes, the absence of such cofactors leads to C3b-mediated complement activation and subsequent opsonization (PubMed:28671664).</text>
</comment>
<comment type="catalytic activity">
    <reaction>
        <text>Inactivates complement subcomponents C3b, iC3b and C4b by proteolytic cleavage.</text>
        <dbReference type="EC" id="3.4.21.45"/>
    </reaction>
</comment>
<comment type="subunit">
    <text evidence="21 23 30">Heterodimer of a light and heavy chains; disulfide-linked. The fully processed and mature protein circulates as a zymogen, and is allosterically activated by substrate-induced remodeling of the active site (PubMed:21768352). Interacts with C3b (PubMed:28671664, PubMed:9291131). Interacts with complement factor H (PubMed:28671664, PubMed:9291131).</text>
</comment>
<comment type="subunit">
    <text evidence="15">(Microbial infection) Interacts with Staphylococcus aureus clumping factor A/ClfA; this interaction enhances cleavage of C3b into iC3b by CFI.</text>
</comment>
<comment type="subcellular location">
    <subcellularLocation>
        <location>Secreted</location>
        <location>Extracellular space</location>
    </subcellularLocation>
    <subcellularLocation>
        <location evidence="26">Secreted</location>
    </subcellularLocation>
</comment>
<comment type="tissue specificity">
    <text evidence="14 26 27">Expressed in the liver by hepatocytes (PubMed:6327681). Also present in other cells such as monocytes, fibroblasts or keratinocytes (PubMed:17320177, PubMed:6444659).</text>
</comment>
<comment type="disease" evidence="9 11 13 19">
    <disease id="DI-02598">
        <name>Hemolytic uremic syndrome, atypical, 3</name>
        <acronym>AHUS3</acronym>
        <description>An atypical form of hemolytic uremic syndrome. It is a complex genetic disease characterized by microangiopathic hemolytic anemia, thrombocytopenia, renal failure and absence of episodes of enterocolitis and diarrhea. In contrast to typical hemolytic uremic syndrome, atypical forms have a poorer prognosis, with higher death rates and frequent progression to end-stage renal disease.</description>
        <dbReference type="MIM" id="612923"/>
    </disease>
    <text>Disease susceptibility is associated with variants affecting the gene represented in this entry. Other genes may play a role in modifying the phenotype.</text>
</comment>
<comment type="disease" evidence="7 12 29">
    <disease id="DI-01378">
        <name>Complement factor I deficiency</name>
        <acronym>CFI deficiency</acronym>
        <description>Autosomal recessive condition associated with a propensity to pyogenic infections.</description>
        <dbReference type="MIM" id="610984"/>
    </disease>
    <text>The disease is caused by variants affecting the gene represented in this entry.</text>
</comment>
<comment type="disease" evidence="22">
    <disease id="DI-03914">
        <name>Macular degeneration, age-related, 13</name>
        <acronym>ARMD13</acronym>
        <description>A form of age-related macular degeneration, a multifactorial eye disease and the most common cause of irreversible vision loss in the developed world. In most patients, the disease is manifest as ophthalmoscopically visible yellowish accumulations of protein and lipid that lie beneath the retinal pigment epithelium and within an elastin-containing structure known as Bruch membrane.</description>
        <dbReference type="MIM" id="615439"/>
    </disease>
    <text>Disease susceptibility is associated with variants affecting the gene represented in this entry.</text>
</comment>
<comment type="similarity">
    <text evidence="4">Belongs to the peptidase S1 family.</text>
</comment>
<comment type="sequence caution" evidence="32">
    <conflict type="erroneous initiation">
        <sequence resource="EMBL-CDS" id="CAA68416"/>
    </conflict>
    <text>Extended N-terminus.</text>
</comment>
<comment type="online information" name="CFIbase">
    <link uri="https://databases.lovd.nl/shared/genes/CFI"/>
    <text>CFI mutation db</text>
</comment>
<organism>
    <name type="scientific">Homo sapiens</name>
    <name type="common">Human</name>
    <dbReference type="NCBI Taxonomy" id="9606"/>
    <lineage>
        <taxon>Eukaryota</taxon>
        <taxon>Metazoa</taxon>
        <taxon>Chordata</taxon>
        <taxon>Craniata</taxon>
        <taxon>Vertebrata</taxon>
        <taxon>Euteleostomi</taxon>
        <taxon>Mammalia</taxon>
        <taxon>Eutheria</taxon>
        <taxon>Euarchontoglires</taxon>
        <taxon>Primates</taxon>
        <taxon>Haplorrhini</taxon>
        <taxon>Catarrhini</taxon>
        <taxon>Hominidae</taxon>
        <taxon>Homo</taxon>
    </lineage>
</organism>
<proteinExistence type="evidence at protein level"/>
<evidence type="ECO:0000250" key="1">
    <source>
        <dbReference type="UniProtKB" id="P00750"/>
    </source>
</evidence>
<evidence type="ECO:0000255" key="2">
    <source>
        <dbReference type="PROSITE-ProRule" id="PRU00124"/>
    </source>
</evidence>
<evidence type="ECO:0000255" key="3">
    <source>
        <dbReference type="PROSITE-ProRule" id="PRU00196"/>
    </source>
</evidence>
<evidence type="ECO:0000255" key="4">
    <source>
        <dbReference type="PROSITE-ProRule" id="PRU00274"/>
    </source>
</evidence>
<evidence type="ECO:0000255" key="5">
    <source>
        <dbReference type="PROSITE-ProRule" id="PRU00798"/>
    </source>
</evidence>
<evidence type="ECO:0000269" key="6">
    <source>
    </source>
</evidence>
<evidence type="ECO:0000269" key="7">
    <source>
    </source>
</evidence>
<evidence type="ECO:0000269" key="8">
    <source>
    </source>
</evidence>
<evidence type="ECO:0000269" key="9">
    <source>
    </source>
</evidence>
<evidence type="ECO:0000269" key="10">
    <source>
    </source>
</evidence>
<evidence type="ECO:0000269" key="11">
    <source>
    </source>
</evidence>
<evidence type="ECO:0000269" key="12">
    <source>
    </source>
</evidence>
<evidence type="ECO:0000269" key="13">
    <source>
    </source>
</evidence>
<evidence type="ECO:0000269" key="14">
    <source>
    </source>
</evidence>
<evidence type="ECO:0000269" key="15">
    <source>
    </source>
</evidence>
<evidence type="ECO:0000269" key="16">
    <source>
    </source>
</evidence>
<evidence type="ECO:0000269" key="17">
    <source>
    </source>
</evidence>
<evidence type="ECO:0000269" key="18">
    <source>
    </source>
</evidence>
<evidence type="ECO:0000269" key="19">
    <source>
    </source>
</evidence>
<evidence type="ECO:0000269" key="20">
    <source>
    </source>
</evidence>
<evidence type="ECO:0000269" key="21">
    <source>
    </source>
</evidence>
<evidence type="ECO:0000269" key="22">
    <source>
    </source>
</evidence>
<evidence type="ECO:0000269" key="23">
    <source>
    </source>
</evidence>
<evidence type="ECO:0000269" key="24">
    <source>
    </source>
</evidence>
<evidence type="ECO:0000269" key="25">
    <source>
    </source>
</evidence>
<evidence type="ECO:0000269" key="26">
    <source>
    </source>
</evidence>
<evidence type="ECO:0000269" key="27">
    <source>
    </source>
</evidence>
<evidence type="ECO:0000269" key="28">
    <source>
    </source>
</evidence>
<evidence type="ECO:0000269" key="29">
    <source>
    </source>
</evidence>
<evidence type="ECO:0000269" key="30">
    <source>
    </source>
</evidence>
<evidence type="ECO:0000269" key="31">
    <source>
    </source>
</evidence>
<evidence type="ECO:0000305" key="32"/>
<evidence type="ECO:0007744" key="33">
    <source>
        <dbReference type="PDB" id="2XRC"/>
    </source>
</evidence>
<evidence type="ECO:0007744" key="34">
    <source>
        <dbReference type="PDB" id="5O32"/>
    </source>
</evidence>
<evidence type="ECO:0007744" key="35">
    <source>
    </source>
</evidence>
<evidence type="ECO:0007829" key="36">
    <source>
        <dbReference type="PDB" id="2XRC"/>
    </source>
</evidence>
<dbReference type="EC" id="3.4.21.45"/>
<dbReference type="EMBL" id="Y00318">
    <property type="protein sequence ID" value="CAA68416.1"/>
    <property type="status" value="ALT_INIT"/>
    <property type="molecule type" value="mRNA"/>
</dbReference>
<dbReference type="EMBL" id="J02770">
    <property type="protein sequence ID" value="AAA52455.1"/>
    <property type="molecule type" value="mRNA"/>
</dbReference>
<dbReference type="EMBL" id="AC126283">
    <property type="status" value="NOT_ANNOTATED_CDS"/>
    <property type="molecule type" value="Genomic_DNA"/>
</dbReference>
<dbReference type="EMBL" id="AF005095">
    <property type="protein sequence ID" value="AAC08733.2"/>
    <property type="molecule type" value="Genomic_DNA"/>
</dbReference>
<dbReference type="CCDS" id="CCDS34049.1"/>
<dbReference type="PIR" id="A29154">
    <property type="entry name" value="A29154"/>
</dbReference>
<dbReference type="RefSeq" id="NP_000195.3">
    <property type="nucleotide sequence ID" value="NM_000204.5"/>
</dbReference>
<dbReference type="RefSeq" id="NP_001317964.1">
    <property type="nucleotide sequence ID" value="NM_001331035.1"/>
</dbReference>
<dbReference type="PDB" id="2XRC">
    <property type="method" value="X-ray"/>
    <property type="resolution" value="2.69 A"/>
    <property type="chains" value="A/B/C/D=19-583"/>
</dbReference>
<dbReference type="PDB" id="5O32">
    <property type="method" value="X-ray"/>
    <property type="resolution" value="2.69 A"/>
    <property type="chains" value="D/H=19-339, I/J=340-583"/>
</dbReference>
<dbReference type="PDBsum" id="2XRC"/>
<dbReference type="PDBsum" id="5O32"/>
<dbReference type="SMR" id="P05156"/>
<dbReference type="BioGRID" id="109652">
    <property type="interactions" value="15"/>
</dbReference>
<dbReference type="ComplexPortal" id="CPX-6165">
    <property type="entry name" value="Complement factor I complex"/>
</dbReference>
<dbReference type="FunCoup" id="P05156">
    <property type="interactions" value="212"/>
</dbReference>
<dbReference type="IntAct" id="P05156">
    <property type="interactions" value="15"/>
</dbReference>
<dbReference type="MINT" id="P05156"/>
<dbReference type="STRING" id="9606.ENSP00000378131"/>
<dbReference type="DrugBank" id="DB09130">
    <property type="generic name" value="Copper"/>
</dbReference>
<dbReference type="DrugBank" id="DB01593">
    <property type="generic name" value="Zinc"/>
</dbReference>
<dbReference type="DrugBank" id="DB14487">
    <property type="generic name" value="Zinc acetate"/>
</dbReference>
<dbReference type="MEROPS" id="S01.199"/>
<dbReference type="GlyConnect" id="742">
    <property type="glycosylation" value="21 N-Linked glycans (6 sites)"/>
</dbReference>
<dbReference type="GlyCosmos" id="P05156">
    <property type="glycosylation" value="6 sites, 33 glycans"/>
</dbReference>
<dbReference type="GlyGen" id="P05156">
    <property type="glycosylation" value="7 sites, 84 N-linked glycans (6 sites), 1 O-linked glycan (1 site)"/>
</dbReference>
<dbReference type="iPTMnet" id="P05156"/>
<dbReference type="PhosphoSitePlus" id="P05156"/>
<dbReference type="BioMuta" id="CFI"/>
<dbReference type="DMDM" id="317373341"/>
<dbReference type="CPTAC" id="non-CPTAC-1113"/>
<dbReference type="CPTAC" id="non-CPTAC-2659"/>
<dbReference type="CPTAC" id="non-CPTAC-2660"/>
<dbReference type="jPOST" id="P05156"/>
<dbReference type="MassIVE" id="P05156"/>
<dbReference type="PaxDb" id="9606-ENSP00000378130"/>
<dbReference type="PeptideAtlas" id="P05156"/>
<dbReference type="ProteomicsDB" id="51807"/>
<dbReference type="Antibodypedia" id="695">
    <property type="antibodies" value="736 antibodies from 35 providers"/>
</dbReference>
<dbReference type="DNASU" id="3426"/>
<dbReference type="Ensembl" id="ENST00000394634.7">
    <property type="protein sequence ID" value="ENSP00000378130.2"/>
    <property type="gene ID" value="ENSG00000205403.15"/>
</dbReference>
<dbReference type="GeneID" id="3426"/>
<dbReference type="KEGG" id="hsa:3426"/>
<dbReference type="MANE-Select" id="ENST00000394634.7">
    <property type="protein sequence ID" value="ENSP00000378130.2"/>
    <property type="RefSeq nucleotide sequence ID" value="NM_000204.5"/>
    <property type="RefSeq protein sequence ID" value="NP_000195.3"/>
</dbReference>
<dbReference type="UCSC" id="uc003hzr.5">
    <property type="organism name" value="human"/>
</dbReference>
<dbReference type="AGR" id="HGNC:5394"/>
<dbReference type="CTD" id="3426"/>
<dbReference type="DisGeNET" id="3426"/>
<dbReference type="GeneCards" id="CFI"/>
<dbReference type="GeneReviews" id="CFI"/>
<dbReference type="HGNC" id="HGNC:5394">
    <property type="gene designation" value="CFI"/>
</dbReference>
<dbReference type="HPA" id="ENSG00000205403">
    <property type="expression patterns" value="Tissue enriched (liver)"/>
</dbReference>
<dbReference type="MalaCards" id="CFI"/>
<dbReference type="MIM" id="217030">
    <property type="type" value="gene"/>
</dbReference>
<dbReference type="MIM" id="610984">
    <property type="type" value="phenotype"/>
</dbReference>
<dbReference type="MIM" id="612923">
    <property type="type" value="phenotype"/>
</dbReference>
<dbReference type="MIM" id="615439">
    <property type="type" value="phenotype"/>
</dbReference>
<dbReference type="neXtProt" id="NX_P05156"/>
<dbReference type="OpenTargets" id="ENSG00000205403"/>
<dbReference type="Orphanet" id="544472">
    <property type="disease" value="Atypical hemolytic uremic syndrome with complement gene abnormality"/>
</dbReference>
<dbReference type="Orphanet" id="244275">
    <property type="disease" value="De novo thrombotic microangiopathy after kidney transplantation"/>
</dbReference>
<dbReference type="Orphanet" id="75376">
    <property type="disease" value="Familial drusen"/>
</dbReference>
<dbReference type="Orphanet" id="244242">
    <property type="disease" value="HELLP syndrome"/>
</dbReference>
<dbReference type="Orphanet" id="200418">
    <property type="disease" value="Immunodeficiency with factor I anomaly"/>
</dbReference>
<dbReference type="PharmGKB" id="PA29641"/>
<dbReference type="VEuPathDB" id="HostDB:ENSG00000205403"/>
<dbReference type="eggNOG" id="KOG3627">
    <property type="taxonomic scope" value="Eukaryota"/>
</dbReference>
<dbReference type="GeneTree" id="ENSGT00930000151042"/>
<dbReference type="InParanoid" id="P05156"/>
<dbReference type="OrthoDB" id="19606at2759"/>
<dbReference type="PAN-GO" id="P05156">
    <property type="GO annotations" value="0 GO annotations based on evolutionary models"/>
</dbReference>
<dbReference type="PhylomeDB" id="P05156"/>
<dbReference type="TreeFam" id="TF330647"/>
<dbReference type="BRENDA" id="3.4.21.45">
    <property type="organism ID" value="2681"/>
</dbReference>
<dbReference type="PathwayCommons" id="P05156"/>
<dbReference type="Reactome" id="R-HSA-977606">
    <property type="pathway name" value="Regulation of Complement cascade"/>
</dbReference>
<dbReference type="SignaLink" id="P05156"/>
<dbReference type="SIGNOR" id="P05156"/>
<dbReference type="BioGRID-ORCS" id="3426">
    <property type="hits" value="8 hits in 1147 CRISPR screens"/>
</dbReference>
<dbReference type="ChiTaRS" id="CFI">
    <property type="organism name" value="human"/>
</dbReference>
<dbReference type="EvolutionaryTrace" id="P05156"/>
<dbReference type="GeneWiki" id="Complement_factor_I"/>
<dbReference type="GenomeRNAi" id="3426"/>
<dbReference type="Pharos" id="P05156">
    <property type="development level" value="Tbio"/>
</dbReference>
<dbReference type="PRO" id="PR:P05156"/>
<dbReference type="Proteomes" id="UP000005640">
    <property type="component" value="Chromosome 4"/>
</dbReference>
<dbReference type="RNAct" id="P05156">
    <property type="molecule type" value="protein"/>
</dbReference>
<dbReference type="Bgee" id="ENSG00000205403">
    <property type="expression patterns" value="Expressed in germinal epithelium of ovary and 157 other cell types or tissues"/>
</dbReference>
<dbReference type="ExpressionAtlas" id="P05156">
    <property type="expression patterns" value="baseline and differential"/>
</dbReference>
<dbReference type="GO" id="GO:0070062">
    <property type="term" value="C:extracellular exosome"/>
    <property type="evidence" value="ECO:0007005"/>
    <property type="project" value="UniProtKB"/>
</dbReference>
<dbReference type="GO" id="GO:0005576">
    <property type="term" value="C:extracellular region"/>
    <property type="evidence" value="ECO:0000304"/>
    <property type="project" value="Reactome"/>
</dbReference>
<dbReference type="GO" id="GO:0005615">
    <property type="term" value="C:extracellular space"/>
    <property type="evidence" value="ECO:0007005"/>
    <property type="project" value="UniProtKB"/>
</dbReference>
<dbReference type="GO" id="GO:0016020">
    <property type="term" value="C:membrane"/>
    <property type="evidence" value="ECO:0007669"/>
    <property type="project" value="InterPro"/>
</dbReference>
<dbReference type="GO" id="GO:0046872">
    <property type="term" value="F:metal ion binding"/>
    <property type="evidence" value="ECO:0007669"/>
    <property type="project" value="UniProtKB-KW"/>
</dbReference>
<dbReference type="GO" id="GO:0004252">
    <property type="term" value="F:serine-type endopeptidase activity"/>
    <property type="evidence" value="ECO:0000304"/>
    <property type="project" value="ProtInc"/>
</dbReference>
<dbReference type="GO" id="GO:0006958">
    <property type="term" value="P:complement activation, classical pathway"/>
    <property type="evidence" value="ECO:0007669"/>
    <property type="project" value="UniProtKB-KW"/>
</dbReference>
<dbReference type="GO" id="GO:0045087">
    <property type="term" value="P:innate immune response"/>
    <property type="evidence" value="ECO:0007669"/>
    <property type="project" value="UniProtKB-KW"/>
</dbReference>
<dbReference type="GO" id="GO:0006508">
    <property type="term" value="P:proteolysis"/>
    <property type="evidence" value="ECO:0007669"/>
    <property type="project" value="UniProtKB-KW"/>
</dbReference>
<dbReference type="CDD" id="cd00112">
    <property type="entry name" value="LDLa"/>
    <property type="match status" value="2"/>
</dbReference>
<dbReference type="CDD" id="cd00190">
    <property type="entry name" value="Tryp_SPc"/>
    <property type="match status" value="1"/>
</dbReference>
<dbReference type="FunFam" id="2.40.10.10:FF:000066">
    <property type="entry name" value="Complement factor I"/>
    <property type="match status" value="1"/>
</dbReference>
<dbReference type="FunFam" id="3.10.250.10:FF:000018">
    <property type="entry name" value="Complement factor I"/>
    <property type="match status" value="1"/>
</dbReference>
<dbReference type="FunFam" id="3.30.60.30:FF:000027">
    <property type="entry name" value="Complement factor I"/>
    <property type="match status" value="1"/>
</dbReference>
<dbReference type="FunFam" id="4.10.400.10:FF:000129">
    <property type="entry name" value="Complement factor I"/>
    <property type="match status" value="1"/>
</dbReference>
<dbReference type="FunFam" id="4.10.400.10:FF:000163">
    <property type="entry name" value="Complement factor I"/>
    <property type="match status" value="1"/>
</dbReference>
<dbReference type="Gene3D" id="3.30.60.30">
    <property type="match status" value="1"/>
</dbReference>
<dbReference type="Gene3D" id="4.10.400.10">
    <property type="entry name" value="Low-density Lipoprotein Receptor"/>
    <property type="match status" value="2"/>
</dbReference>
<dbReference type="Gene3D" id="3.10.250.10">
    <property type="entry name" value="SRCR-like domain"/>
    <property type="match status" value="1"/>
</dbReference>
<dbReference type="Gene3D" id="2.40.10.10">
    <property type="entry name" value="Trypsin-like serine proteases"/>
    <property type="match status" value="1"/>
</dbReference>
<dbReference type="InterPro" id="IPR048722">
    <property type="entry name" value="CFAI_FIMAC_N"/>
</dbReference>
<dbReference type="InterPro" id="IPR048719">
    <property type="entry name" value="CFAI_KAZAL"/>
</dbReference>
<dbReference type="InterPro" id="IPR003884">
    <property type="entry name" value="FacI_MAC"/>
</dbReference>
<dbReference type="InterPro" id="IPR002350">
    <property type="entry name" value="Kazal_dom"/>
</dbReference>
<dbReference type="InterPro" id="IPR036058">
    <property type="entry name" value="Kazal_dom_sf"/>
</dbReference>
<dbReference type="InterPro" id="IPR036055">
    <property type="entry name" value="LDL_receptor-like_sf"/>
</dbReference>
<dbReference type="InterPro" id="IPR023415">
    <property type="entry name" value="LDLR_class-A_CS"/>
</dbReference>
<dbReference type="InterPro" id="IPR002172">
    <property type="entry name" value="LDrepeatLR_classA_rpt"/>
</dbReference>
<dbReference type="InterPro" id="IPR009003">
    <property type="entry name" value="Peptidase_S1_PA"/>
</dbReference>
<dbReference type="InterPro" id="IPR043504">
    <property type="entry name" value="Peptidase_S1_PA_chymotrypsin"/>
</dbReference>
<dbReference type="InterPro" id="IPR001314">
    <property type="entry name" value="Peptidase_S1A"/>
</dbReference>
<dbReference type="InterPro" id="IPR001190">
    <property type="entry name" value="SRCR"/>
</dbReference>
<dbReference type="InterPro" id="IPR036772">
    <property type="entry name" value="SRCR-like_dom_sf"/>
</dbReference>
<dbReference type="InterPro" id="IPR001254">
    <property type="entry name" value="Trypsin_dom"/>
</dbReference>
<dbReference type="InterPro" id="IPR018114">
    <property type="entry name" value="TRYPSIN_HIS"/>
</dbReference>
<dbReference type="InterPro" id="IPR033116">
    <property type="entry name" value="TRYPSIN_SER"/>
</dbReference>
<dbReference type="PANTHER" id="PTHR24252">
    <property type="entry name" value="ACROSIN-RELATED"/>
    <property type="match status" value="1"/>
</dbReference>
<dbReference type="PANTHER" id="PTHR24252:SF7">
    <property type="entry name" value="HYALIN"/>
    <property type="match status" value="1"/>
</dbReference>
<dbReference type="Pfam" id="PF21286">
    <property type="entry name" value="CFAI_FIMAC_N"/>
    <property type="match status" value="1"/>
</dbReference>
<dbReference type="Pfam" id="PF21287">
    <property type="entry name" value="Kazal_CFAI"/>
    <property type="match status" value="1"/>
</dbReference>
<dbReference type="Pfam" id="PF00057">
    <property type="entry name" value="Ldl_recept_a"/>
    <property type="match status" value="2"/>
</dbReference>
<dbReference type="Pfam" id="PF00530">
    <property type="entry name" value="SRCR"/>
    <property type="match status" value="1"/>
</dbReference>
<dbReference type="Pfam" id="PF00089">
    <property type="entry name" value="Trypsin"/>
    <property type="match status" value="1"/>
</dbReference>
<dbReference type="PRINTS" id="PR00722">
    <property type="entry name" value="CHYMOTRYPSIN"/>
</dbReference>
<dbReference type="SMART" id="SM00057">
    <property type="entry name" value="FIMAC"/>
    <property type="match status" value="1"/>
</dbReference>
<dbReference type="SMART" id="SM00192">
    <property type="entry name" value="LDLa"/>
    <property type="match status" value="2"/>
</dbReference>
<dbReference type="SMART" id="SM00202">
    <property type="entry name" value="SR"/>
    <property type="match status" value="1"/>
</dbReference>
<dbReference type="SMART" id="SM00020">
    <property type="entry name" value="Tryp_SPc"/>
    <property type="match status" value="1"/>
</dbReference>
<dbReference type="SUPFAM" id="SSF100895">
    <property type="entry name" value="Kazal-type serine protease inhibitors"/>
    <property type="match status" value="1"/>
</dbReference>
<dbReference type="SUPFAM" id="SSF57424">
    <property type="entry name" value="LDL receptor-like module"/>
    <property type="match status" value="2"/>
</dbReference>
<dbReference type="SUPFAM" id="SSF56487">
    <property type="entry name" value="SRCR-like"/>
    <property type="match status" value="1"/>
</dbReference>
<dbReference type="SUPFAM" id="SSF50494">
    <property type="entry name" value="Trypsin-like serine proteases"/>
    <property type="match status" value="1"/>
</dbReference>
<dbReference type="PROSITE" id="PS51465">
    <property type="entry name" value="KAZAL_2"/>
    <property type="match status" value="1"/>
</dbReference>
<dbReference type="PROSITE" id="PS01209">
    <property type="entry name" value="LDLRA_1"/>
    <property type="match status" value="1"/>
</dbReference>
<dbReference type="PROSITE" id="PS50068">
    <property type="entry name" value="LDLRA_2"/>
    <property type="match status" value="2"/>
</dbReference>
<dbReference type="PROSITE" id="PS50287">
    <property type="entry name" value="SRCR_2"/>
    <property type="match status" value="1"/>
</dbReference>
<dbReference type="PROSITE" id="PS50240">
    <property type="entry name" value="TRYPSIN_DOM"/>
    <property type="match status" value="1"/>
</dbReference>
<dbReference type="PROSITE" id="PS00134">
    <property type="entry name" value="TRYPSIN_HIS"/>
    <property type="match status" value="1"/>
</dbReference>
<dbReference type="PROSITE" id="PS00135">
    <property type="entry name" value="TRYPSIN_SER"/>
    <property type="match status" value="1"/>
</dbReference>
<keyword id="KW-0002">3D-structure</keyword>
<keyword id="KW-0913">Age-related macular degeneration</keyword>
<keyword id="KW-0106">Calcium</keyword>
<keyword id="KW-0165">Cleavage on pair of basic residues</keyword>
<keyword id="KW-0180">Complement pathway</keyword>
<keyword id="KW-0903">Direct protein sequencing</keyword>
<keyword id="KW-0225">Disease variant</keyword>
<keyword id="KW-1015">Disulfide bond</keyword>
<keyword id="KW-0325">Glycoprotein</keyword>
<keyword id="KW-1068">Hemolytic uremic syndrome</keyword>
<keyword id="KW-0945">Host-virus interaction</keyword>
<keyword id="KW-0378">Hydrolase</keyword>
<keyword id="KW-0391">Immunity</keyword>
<keyword id="KW-0399">Innate immunity</keyword>
<keyword id="KW-0479">Metal-binding</keyword>
<keyword id="KW-0645">Protease</keyword>
<keyword id="KW-1267">Proteomics identification</keyword>
<keyword id="KW-1185">Reference proteome</keyword>
<keyword id="KW-0677">Repeat</keyword>
<keyword id="KW-0964">Secreted</keyword>
<keyword id="KW-0720">Serine protease</keyword>
<keyword id="KW-0732">Signal</keyword>
<name>CFAI_HUMAN</name>